<accession>Q6JWV8</accession>
<gene>
    <name evidence="8" type="primary">popdc2</name>
</gene>
<evidence type="ECO:0000250" key="1">
    <source>
        <dbReference type="UniProtKB" id="Q9HBU9"/>
    </source>
</evidence>
<evidence type="ECO:0000255" key="2"/>
<evidence type="ECO:0000256" key="3">
    <source>
        <dbReference type="SAM" id="MobiDB-lite"/>
    </source>
</evidence>
<evidence type="ECO:0000269" key="4">
    <source>
    </source>
</evidence>
<evidence type="ECO:0000305" key="5"/>
<evidence type="ECO:0000312" key="6">
    <source>
        <dbReference type="EMBL" id="AAI29265.1"/>
    </source>
</evidence>
<evidence type="ECO:0000312" key="7">
    <source>
        <dbReference type="EMBL" id="AAQ57588.1"/>
    </source>
</evidence>
<evidence type="ECO:0000312" key="8">
    <source>
        <dbReference type="ZFIN" id="ZDB-GENE-060518-2"/>
    </source>
</evidence>
<protein>
    <recommendedName>
        <fullName evidence="8">Popeye domain-containing 2</fullName>
    </recommendedName>
</protein>
<sequence>MNSGDSSLIDAVIYNHTLCDGWTNSTEGAIYHLGNTILFLGYMGGSGAYGALYIFSFLAPAFLCLALWGWLTMCGLDVFIWNLLLMLQCLAQVCHLIFRLMRDGLANEEFSALYTAVYLPLDVPVQVFKEITGAGENKVLSLAAEETYAVEGKTPIDQLSFLLSGRIRVSLEGQFLHYIFPHQFLDSPEWESLRPAEEGNFQVTLTAETDCRYISWRRRRLYLLLSKDRYIARLFSVMLGSDIADKLYSLNDKLFAKSGVRLDIRLPSLYHVLAPSPPGSEGGSASSPPRGSLGDPTVIKVDPAPSNPGSGTRNPQPDQGKNPVPKNPHQHWSSDTEMPSGEDSTSLILEDFADMTGSLMDYGHEREYLK</sequence>
<name>POPD2_DANRE</name>
<dbReference type="EMBL" id="BX511129">
    <property type="status" value="NOT_ANNOTATED_CDS"/>
    <property type="molecule type" value="Genomic_DNA"/>
</dbReference>
<dbReference type="EMBL" id="AY293119">
    <property type="protein sequence ID" value="AAQ57588.1"/>
    <property type="molecule type" value="mRNA"/>
</dbReference>
<dbReference type="EMBL" id="BC129264">
    <property type="protein sequence ID" value="AAI29265.1"/>
    <property type="molecule type" value="mRNA"/>
</dbReference>
<dbReference type="EMBL" id="BC164200">
    <property type="protein sequence ID" value="AAI64200.1"/>
    <property type="molecule type" value="mRNA"/>
</dbReference>
<dbReference type="RefSeq" id="NP_001018636.1">
    <property type="nucleotide sequence ID" value="NM_001020800.1"/>
</dbReference>
<dbReference type="SMR" id="Q6JWV8"/>
<dbReference type="FunCoup" id="Q6JWV8">
    <property type="interactions" value="1019"/>
</dbReference>
<dbReference type="STRING" id="7955.ENSDARP00000092923"/>
<dbReference type="PaxDb" id="7955-ENSDARP00000092923"/>
<dbReference type="Ensembl" id="ENSDART00000102147">
    <property type="protein sequence ID" value="ENSDARP00000092923"/>
    <property type="gene ID" value="ENSDARG00000069922"/>
</dbReference>
<dbReference type="Ensembl" id="ENSDART00000162578">
    <property type="protein sequence ID" value="ENSDARP00000136769"/>
    <property type="gene ID" value="ENSDARG00000069922"/>
</dbReference>
<dbReference type="GeneID" id="793666"/>
<dbReference type="KEGG" id="dre:793666"/>
<dbReference type="AGR" id="ZFIN:ZDB-GENE-060518-2"/>
<dbReference type="CTD" id="64091"/>
<dbReference type="ZFIN" id="ZDB-GENE-060518-2">
    <property type="gene designation" value="popdc2"/>
</dbReference>
<dbReference type="eggNOG" id="ENOG502R0XG">
    <property type="taxonomic scope" value="Eukaryota"/>
</dbReference>
<dbReference type="HOGENOM" id="CLU_048494_2_0_1"/>
<dbReference type="InParanoid" id="Q6JWV8"/>
<dbReference type="OMA" id="MFRENSS"/>
<dbReference type="OrthoDB" id="425611at2759"/>
<dbReference type="PhylomeDB" id="Q6JWV8"/>
<dbReference type="TreeFam" id="TF326644"/>
<dbReference type="PRO" id="PR:Q6JWV8"/>
<dbReference type="Proteomes" id="UP000000437">
    <property type="component" value="Alternate scaffold 9"/>
</dbReference>
<dbReference type="Proteomes" id="UP000000437">
    <property type="component" value="Chromosome 9"/>
</dbReference>
<dbReference type="Bgee" id="ENSDARG00000069922">
    <property type="expression patterns" value="Expressed in heart and 10 other cell types or tissues"/>
</dbReference>
<dbReference type="ExpressionAtlas" id="Q6JWV8">
    <property type="expression patterns" value="baseline"/>
</dbReference>
<dbReference type="GO" id="GO:0042383">
    <property type="term" value="C:sarcolemma"/>
    <property type="evidence" value="ECO:0000318"/>
    <property type="project" value="GO_Central"/>
</dbReference>
<dbReference type="GO" id="GO:0030552">
    <property type="term" value="F:cAMP binding"/>
    <property type="evidence" value="ECO:0000318"/>
    <property type="project" value="GO_Central"/>
</dbReference>
<dbReference type="GO" id="GO:0061337">
    <property type="term" value="P:cardiac conduction"/>
    <property type="evidence" value="ECO:0000315"/>
    <property type="project" value="ZFIN"/>
</dbReference>
<dbReference type="GO" id="GO:0007507">
    <property type="term" value="P:heart development"/>
    <property type="evidence" value="ECO:0000318"/>
    <property type="project" value="GO_Central"/>
</dbReference>
<dbReference type="GO" id="GO:0001947">
    <property type="term" value="P:heart looping"/>
    <property type="evidence" value="ECO:0000315"/>
    <property type="project" value="ZFIN"/>
</dbReference>
<dbReference type="GO" id="GO:0042391">
    <property type="term" value="P:regulation of membrane potential"/>
    <property type="evidence" value="ECO:0000318"/>
    <property type="project" value="GO_Central"/>
</dbReference>
<dbReference type="GO" id="GO:0007519">
    <property type="term" value="P:skeletal muscle tissue development"/>
    <property type="evidence" value="ECO:0000318"/>
    <property type="project" value="GO_Central"/>
</dbReference>
<dbReference type="GO" id="GO:0051146">
    <property type="term" value="P:striated muscle cell differentiation"/>
    <property type="evidence" value="ECO:0000315"/>
    <property type="project" value="ZFIN"/>
</dbReference>
<dbReference type="InterPro" id="IPR018490">
    <property type="entry name" value="cNMP-bd_dom_sf"/>
</dbReference>
<dbReference type="InterPro" id="IPR006916">
    <property type="entry name" value="POPDC1-3"/>
</dbReference>
<dbReference type="InterPro" id="IPR055272">
    <property type="entry name" value="POPDC1-3_dom"/>
</dbReference>
<dbReference type="PANTHER" id="PTHR12101">
    <property type="entry name" value="POPEYE DOMAIN CONTAINING PROTEIN"/>
    <property type="match status" value="1"/>
</dbReference>
<dbReference type="PANTHER" id="PTHR12101:SF15">
    <property type="entry name" value="POPEYE DOMAIN-CONTAINING PROTEIN 2"/>
    <property type="match status" value="1"/>
</dbReference>
<dbReference type="Pfam" id="PF04831">
    <property type="entry name" value="POPDC1-3"/>
    <property type="match status" value="1"/>
</dbReference>
<dbReference type="SUPFAM" id="SSF51206">
    <property type="entry name" value="cAMP-binding domain-like"/>
    <property type="match status" value="1"/>
</dbReference>
<reference evidence="7" key="1">
    <citation type="submission" date="2003-05" db="EMBL/GenBank/DDBJ databases">
        <title>Characterization of the popeye gene family in zebrafish.</title>
        <authorList>
            <person name="Brand T."/>
            <person name="Meyer D."/>
            <person name="Yelon D."/>
        </authorList>
    </citation>
    <scope>NUCLEOTIDE SEQUENCE [MRNA]</scope>
</reference>
<reference key="2">
    <citation type="journal article" date="2013" name="Nature">
        <title>The zebrafish reference genome sequence and its relationship to the human genome.</title>
        <authorList>
            <person name="Howe K."/>
            <person name="Clark M.D."/>
            <person name="Torroja C.F."/>
            <person name="Torrance J."/>
            <person name="Berthelot C."/>
            <person name="Muffato M."/>
            <person name="Collins J.E."/>
            <person name="Humphray S."/>
            <person name="McLaren K."/>
            <person name="Matthews L."/>
            <person name="McLaren S."/>
            <person name="Sealy I."/>
            <person name="Caccamo M."/>
            <person name="Churcher C."/>
            <person name="Scott C."/>
            <person name="Barrett J.C."/>
            <person name="Koch R."/>
            <person name="Rauch G.J."/>
            <person name="White S."/>
            <person name="Chow W."/>
            <person name="Kilian B."/>
            <person name="Quintais L.T."/>
            <person name="Guerra-Assuncao J.A."/>
            <person name="Zhou Y."/>
            <person name="Gu Y."/>
            <person name="Yen J."/>
            <person name="Vogel J.H."/>
            <person name="Eyre T."/>
            <person name="Redmond S."/>
            <person name="Banerjee R."/>
            <person name="Chi J."/>
            <person name="Fu B."/>
            <person name="Langley E."/>
            <person name="Maguire S.F."/>
            <person name="Laird G.K."/>
            <person name="Lloyd D."/>
            <person name="Kenyon E."/>
            <person name="Donaldson S."/>
            <person name="Sehra H."/>
            <person name="Almeida-King J."/>
            <person name="Loveland J."/>
            <person name="Trevanion S."/>
            <person name="Jones M."/>
            <person name="Quail M."/>
            <person name="Willey D."/>
            <person name="Hunt A."/>
            <person name="Burton J."/>
            <person name="Sims S."/>
            <person name="McLay K."/>
            <person name="Plumb B."/>
            <person name="Davis J."/>
            <person name="Clee C."/>
            <person name="Oliver K."/>
            <person name="Clark R."/>
            <person name="Riddle C."/>
            <person name="Elliot D."/>
            <person name="Threadgold G."/>
            <person name="Harden G."/>
            <person name="Ware D."/>
            <person name="Begum S."/>
            <person name="Mortimore B."/>
            <person name="Kerry G."/>
            <person name="Heath P."/>
            <person name="Phillimore B."/>
            <person name="Tracey A."/>
            <person name="Corby N."/>
            <person name="Dunn M."/>
            <person name="Johnson C."/>
            <person name="Wood J."/>
            <person name="Clark S."/>
            <person name="Pelan S."/>
            <person name="Griffiths G."/>
            <person name="Smith M."/>
            <person name="Glithero R."/>
            <person name="Howden P."/>
            <person name="Barker N."/>
            <person name="Lloyd C."/>
            <person name="Stevens C."/>
            <person name="Harley J."/>
            <person name="Holt K."/>
            <person name="Panagiotidis G."/>
            <person name="Lovell J."/>
            <person name="Beasley H."/>
            <person name="Henderson C."/>
            <person name="Gordon D."/>
            <person name="Auger K."/>
            <person name="Wright D."/>
            <person name="Collins J."/>
            <person name="Raisen C."/>
            <person name="Dyer L."/>
            <person name="Leung K."/>
            <person name="Robertson L."/>
            <person name="Ambridge K."/>
            <person name="Leongamornlert D."/>
            <person name="McGuire S."/>
            <person name="Gilderthorp R."/>
            <person name="Griffiths C."/>
            <person name="Manthravadi D."/>
            <person name="Nichol S."/>
            <person name="Barker G."/>
            <person name="Whitehead S."/>
            <person name="Kay M."/>
            <person name="Brown J."/>
            <person name="Murnane C."/>
            <person name="Gray E."/>
            <person name="Humphries M."/>
            <person name="Sycamore N."/>
            <person name="Barker D."/>
            <person name="Saunders D."/>
            <person name="Wallis J."/>
            <person name="Babbage A."/>
            <person name="Hammond S."/>
            <person name="Mashreghi-Mohammadi M."/>
            <person name="Barr L."/>
            <person name="Martin S."/>
            <person name="Wray P."/>
            <person name="Ellington A."/>
            <person name="Matthews N."/>
            <person name="Ellwood M."/>
            <person name="Woodmansey R."/>
            <person name="Clark G."/>
            <person name="Cooper J."/>
            <person name="Tromans A."/>
            <person name="Grafham D."/>
            <person name="Skuce C."/>
            <person name="Pandian R."/>
            <person name="Andrews R."/>
            <person name="Harrison E."/>
            <person name="Kimberley A."/>
            <person name="Garnett J."/>
            <person name="Fosker N."/>
            <person name="Hall R."/>
            <person name="Garner P."/>
            <person name="Kelly D."/>
            <person name="Bird C."/>
            <person name="Palmer S."/>
            <person name="Gehring I."/>
            <person name="Berger A."/>
            <person name="Dooley C.M."/>
            <person name="Ersan-Urun Z."/>
            <person name="Eser C."/>
            <person name="Geiger H."/>
            <person name="Geisler M."/>
            <person name="Karotki L."/>
            <person name="Kirn A."/>
            <person name="Konantz J."/>
            <person name="Konantz M."/>
            <person name="Oberlander M."/>
            <person name="Rudolph-Geiger S."/>
            <person name="Teucke M."/>
            <person name="Lanz C."/>
            <person name="Raddatz G."/>
            <person name="Osoegawa K."/>
            <person name="Zhu B."/>
            <person name="Rapp A."/>
            <person name="Widaa S."/>
            <person name="Langford C."/>
            <person name="Yang F."/>
            <person name="Schuster S.C."/>
            <person name="Carter N.P."/>
            <person name="Harrow J."/>
            <person name="Ning Z."/>
            <person name="Herrero J."/>
            <person name="Searle S.M."/>
            <person name="Enright A."/>
            <person name="Geisler R."/>
            <person name="Plasterk R.H."/>
            <person name="Lee C."/>
            <person name="Westerfield M."/>
            <person name="de Jong P.J."/>
            <person name="Zon L.I."/>
            <person name="Postlethwait J.H."/>
            <person name="Nusslein-Volhard C."/>
            <person name="Hubbard T.J."/>
            <person name="Roest Crollius H."/>
            <person name="Rogers J."/>
            <person name="Stemple D.L."/>
        </authorList>
    </citation>
    <scope>NUCLEOTIDE SEQUENCE [LARGE SCALE GENOMIC DNA]</scope>
    <source>
        <strain>Tuebingen</strain>
    </source>
</reference>
<reference evidence="6" key="3">
    <citation type="submission" date="2008-04" db="EMBL/GenBank/DDBJ databases">
        <authorList>
            <consortium name="NIH - Zebrafish Gene Collection (ZGC) project"/>
        </authorList>
    </citation>
    <scope>NUCLEOTIDE SEQUENCE [LARGE SCALE MRNA]</scope>
    <source>
        <strain evidence="6">AB</strain>
    </source>
</reference>
<reference key="4">
    <citation type="journal article" date="2012" name="Dev. Biol.">
        <title>The Popeye domain containing 2 (popdc2) gene in zebrafish is required for heart and skeletal muscle development.</title>
        <authorList>
            <person name="Kirchmaier B.C."/>
            <person name="Poon K.L."/>
            <person name="Schwerte T."/>
            <person name="Huisken J."/>
            <person name="Winkler C."/>
            <person name="Jungblut B."/>
            <person name="Stainier D.Y."/>
            <person name="Brand T."/>
        </authorList>
    </citation>
    <scope>FUNCTION</scope>
    <scope>DISRUPTION PHENOTYPE</scope>
    <scope>TISSUE SPECIFICITY</scope>
    <scope>DEVELOPMENTAL STAGE</scope>
</reference>
<organism>
    <name type="scientific">Danio rerio</name>
    <name type="common">Zebrafish</name>
    <name type="synonym">Brachydanio rerio</name>
    <dbReference type="NCBI Taxonomy" id="7955"/>
    <lineage>
        <taxon>Eukaryota</taxon>
        <taxon>Metazoa</taxon>
        <taxon>Chordata</taxon>
        <taxon>Craniata</taxon>
        <taxon>Vertebrata</taxon>
        <taxon>Euteleostomi</taxon>
        <taxon>Actinopterygii</taxon>
        <taxon>Neopterygii</taxon>
        <taxon>Teleostei</taxon>
        <taxon>Ostariophysi</taxon>
        <taxon>Cypriniformes</taxon>
        <taxon>Danionidae</taxon>
        <taxon>Danioninae</taxon>
        <taxon>Danio</taxon>
    </lineage>
</organism>
<feature type="chain" id="PRO_0000436602" description="Popeye domain-containing 2">
    <location>
        <begin position="1"/>
        <end position="370"/>
    </location>
</feature>
<feature type="transmembrane region" description="Helical" evidence="2">
    <location>
        <begin position="51"/>
        <end position="71"/>
    </location>
</feature>
<feature type="transmembrane region" description="Helical" evidence="2">
    <location>
        <begin position="78"/>
        <end position="98"/>
    </location>
</feature>
<feature type="region of interest" description="Disordered" evidence="3">
    <location>
        <begin position="275"/>
        <end position="349"/>
    </location>
</feature>
<feature type="compositionally biased region" description="Low complexity" evidence="3">
    <location>
        <begin position="283"/>
        <end position="294"/>
    </location>
</feature>
<feature type="compositionally biased region" description="Polar residues" evidence="3">
    <location>
        <begin position="307"/>
        <end position="319"/>
    </location>
</feature>
<feature type="compositionally biased region" description="Polar residues" evidence="3">
    <location>
        <begin position="330"/>
        <end position="347"/>
    </location>
</feature>
<comment type="function">
    <text evidence="4">Important for striated muscle differentiation and cardiac morphogenesis. Is also required for cardiac conduction system development, plays a regulatory function in heart rate dynamics mediated, at least in part, through cAMP-binding.</text>
</comment>
<comment type="subcellular location">
    <subcellularLocation>
        <location evidence="2">Membrane</location>
        <topology evidence="2">Multi-pass membrane protein</topology>
    </subcellularLocation>
    <subcellularLocation>
        <location evidence="1">Cell membrane</location>
        <location evidence="1">Sarcolemma</location>
    </subcellularLocation>
</comment>
<comment type="tissue specificity">
    <text evidence="4">Expressed in the heart and, slightly, in skeletal muscle.</text>
</comment>
<comment type="developmental stage">
    <text evidence="4">Detectable at 4 hours post-fertilization (hpf), expression levels peaked at 24 hpf and gradually decreased afterwards. Expression become detectable when skeletal muscle differentiation commences at 14-16 somites with an anteropsterior gradient. Myocardial expression starts at 22 hpf in the forming heart tube and, at 24 hpf, is confined to differentiated cardiac muscles cells. At 24 hpf, is also expressed in the entire myotome. At 48 and 72 hpf, expression in the trunk muscle cells disappeares, but is present in muscles cells of the pectoral fin bud and facial muscles.</text>
</comment>
<comment type="disruption phenotype">
    <text evidence="4">Morpholino knockdown of the protein affects skeletal muscle development, resulting in abnormal facial and trunk muscle formation with defective aligment of muscle fibers and establishment of myotendinous junctions. A severe defect is observed in craniofacial muscle development, where many muscles are malformed or reduced in size. In the heart, pericardial edema is prevalent in the morphants with defective looping and misshaped chambers.</text>
</comment>
<comment type="similarity">
    <text evidence="5">Belongs to the popeye family.</text>
</comment>
<proteinExistence type="evidence at transcript level"/>
<keyword id="KW-0114">cAMP</keyword>
<keyword id="KW-0116">cAMP-binding</keyword>
<keyword id="KW-1003">Cell membrane</keyword>
<keyword id="KW-0472">Membrane</keyword>
<keyword id="KW-0547">Nucleotide-binding</keyword>
<keyword id="KW-1185">Reference proteome</keyword>
<keyword id="KW-0812">Transmembrane</keyword>
<keyword id="KW-1133">Transmembrane helix</keyword>